<protein>
    <recommendedName>
        <fullName evidence="15">Malonyl-CoA decarboxylase, mitochondrial</fullName>
        <shortName>MCD</shortName>
        <ecNumber evidence="5 6 7 9 11">4.1.1.9</ecNumber>
    </recommendedName>
</protein>
<feature type="transit peptide" description="Mitochondrion" evidence="4">
    <location>
        <begin position="1"/>
        <end position="39"/>
    </location>
</feature>
<feature type="chain" id="PRO_0000021088" description="Malonyl-CoA decarboxylase, mitochondrial">
    <location>
        <begin position="40"/>
        <end position="493"/>
    </location>
</feature>
<feature type="region of interest" description="Alpha-helical domain">
    <location>
        <begin position="40"/>
        <end position="190"/>
    </location>
</feature>
<feature type="region of interest" description="Catalytic domain">
    <location>
        <begin position="191"/>
        <end position="493"/>
    </location>
</feature>
<feature type="short sequence motif" description="Microbody targeting signal" evidence="4">
    <location>
        <begin position="491"/>
        <end position="493"/>
    </location>
</feature>
<feature type="active site" description="Proton acceptor" evidence="17">
    <location>
        <position position="329"/>
    </location>
</feature>
<feature type="active site" description="Proton donor" evidence="17">
    <location>
        <position position="423"/>
    </location>
</feature>
<feature type="binding site" evidence="15">
    <location>
        <begin position="299"/>
        <end position="305"/>
    </location>
    <ligand>
        <name>malonyl-CoA</name>
        <dbReference type="ChEBI" id="CHEBI:57384"/>
    </ligand>
</feature>
<feature type="binding site" evidence="15">
    <location>
        <position position="329"/>
    </location>
    <ligand>
        <name>malonyl-CoA</name>
        <dbReference type="ChEBI" id="CHEBI:57384"/>
    </ligand>
</feature>
<feature type="binding site" evidence="15">
    <location>
        <position position="423"/>
    </location>
    <ligand>
        <name>malonyl-CoA</name>
        <dbReference type="ChEBI" id="CHEBI:57384"/>
    </ligand>
</feature>
<feature type="site" description="Essential for catalytic activity" evidence="1">
    <location>
        <position position="211"/>
    </location>
</feature>
<feature type="modified residue" description="N6-acetyllysine" evidence="3">
    <location>
        <position position="59"/>
    </location>
</feature>
<feature type="modified residue" description="N6-acetyllysine; alternate" evidence="3">
    <location>
        <position position="168"/>
    </location>
</feature>
<feature type="modified residue" description="N6-succinyllysine; alternate" evidence="3">
    <location>
        <position position="168"/>
    </location>
</feature>
<feature type="modified residue" description="N6-acetyllysine" evidence="3">
    <location>
        <position position="211"/>
    </location>
</feature>
<feature type="modified residue" description="N6-succinyllysine" evidence="3">
    <location>
        <position position="222"/>
    </location>
</feature>
<feature type="modified residue" description="N6-acetyllysine" evidence="3">
    <location>
        <position position="389"/>
    </location>
</feature>
<feature type="modified residue" description="N6-acetyllysine" evidence="3">
    <location>
        <position position="472"/>
    </location>
</feature>
<feature type="disulfide bond" description="Interchain" evidence="4">
    <location>
        <position position="206"/>
    </location>
</feature>
<feature type="splice variant" id="VSP_047649" description="In isoform Cytoplasmic+peroxisomal." evidence="12 13 14">
    <location>
        <begin position="1"/>
        <end position="39"/>
    </location>
</feature>
<feature type="mutagenesis site" description="Abolishes formation of disulfide-linked homotetramers. Abolishes the cooperative enzyme kinetics that are seen under oxidative conditions." evidence="9">
    <original>C</original>
    <variation>S</variation>
    <location>
        <position position="206"/>
    </location>
</feature>
<feature type="mutagenesis site" description="Does not abolish formation of disulfide-linked homotetramers. No effect on development of cooperative enzyme kinetics in response to oxidative conditions." evidence="9">
    <original>C</original>
    <variation>S</variation>
    <location>
        <position position="243"/>
    </location>
</feature>
<feature type="mutagenesis site" description="2-fold reduction in catalytic activity." evidence="10">
    <original>S</original>
    <variation>F</variation>
    <location>
        <position position="290"/>
    </location>
</feature>
<feature type="mutagenesis site" description="Decreases catalytic activity. Increases affinity for malonyl-CoA." evidence="9">
    <original>E</original>
    <variation>G</variation>
    <location>
        <position position="302"/>
    </location>
</feature>
<feature type="mutagenesis site" description="110-fold reduction in catalytic activity." evidence="10">
    <original>S</original>
    <variation>A</variation>
    <location>
        <position position="329"/>
    </location>
</feature>
<feature type="mutagenesis site" description="7-fold reduction in catalytic activity." evidence="10">
    <original>H</original>
    <variation>N</variation>
    <location>
        <position position="423"/>
    </location>
</feature>
<feature type="mutagenesis site" description="3.5-fold reduction in catalytic activity." evidence="10">
    <original>Y</original>
    <variation>S</variation>
    <location>
        <position position="456"/>
    </location>
</feature>
<feature type="sequence conflict" description="In Ref. 1; AAD16177." evidence="15" ref="1">
    <original>A</original>
    <variation>D</variation>
    <location>
        <position position="82"/>
    </location>
</feature>
<feature type="sequence conflict" description="In Ref. 3; AAD48994." evidence="15" ref="3">
    <original>A</original>
    <variation>S</variation>
    <location>
        <position position="119"/>
    </location>
</feature>
<feature type="sequence conflict" description="In Ref. 3; AAD48994." evidence="15" ref="3">
    <original>D</original>
    <variation>V</variation>
    <location>
        <position position="127"/>
    </location>
</feature>
<feature type="sequence conflict" description="In Ref. 2; AAD34631." evidence="15" ref="2">
    <original>S</original>
    <variation>P</variation>
    <location>
        <position position="192"/>
    </location>
</feature>
<feature type="helix" evidence="19">
    <location>
        <begin position="40"/>
        <end position="47"/>
    </location>
</feature>
<feature type="helix" evidence="19">
    <location>
        <begin position="54"/>
        <end position="56"/>
    </location>
</feature>
<feature type="helix" evidence="19">
    <location>
        <begin position="67"/>
        <end position="76"/>
    </location>
</feature>
<feature type="helix" evidence="19">
    <location>
        <begin position="81"/>
        <end position="94"/>
    </location>
</feature>
<feature type="helix" evidence="19">
    <location>
        <begin position="99"/>
        <end position="112"/>
    </location>
</feature>
<feature type="turn" evidence="20">
    <location>
        <begin position="114"/>
        <end position="116"/>
    </location>
</feature>
<feature type="helix" evidence="19">
    <location>
        <begin position="119"/>
        <end position="132"/>
    </location>
</feature>
<feature type="helix" evidence="19">
    <location>
        <begin position="138"/>
        <end position="145"/>
    </location>
</feature>
<feature type="strand" evidence="20">
    <location>
        <begin position="147"/>
        <end position="149"/>
    </location>
</feature>
<feature type="helix" evidence="19">
    <location>
        <begin position="150"/>
        <end position="166"/>
    </location>
</feature>
<feature type="helix" evidence="19">
    <location>
        <begin position="173"/>
        <end position="189"/>
    </location>
</feature>
<feature type="helix" evidence="19">
    <location>
        <begin position="192"/>
        <end position="194"/>
    </location>
</feature>
<feature type="strand" evidence="19">
    <location>
        <begin position="195"/>
        <end position="200"/>
    </location>
</feature>
<feature type="helix" evidence="19">
    <location>
        <begin position="206"/>
        <end position="214"/>
    </location>
</feature>
<feature type="helix" evidence="19">
    <location>
        <begin position="224"/>
        <end position="230"/>
    </location>
</feature>
<feature type="strand" evidence="19">
    <location>
        <begin position="235"/>
        <end position="242"/>
    </location>
</feature>
<feature type="strand" evidence="19">
    <location>
        <begin position="250"/>
        <end position="260"/>
    </location>
</feature>
<feature type="helix" evidence="19">
    <location>
        <begin position="266"/>
        <end position="269"/>
    </location>
</feature>
<feature type="strand" evidence="19">
    <location>
        <begin position="285"/>
        <end position="294"/>
    </location>
</feature>
<feature type="helix" evidence="19">
    <location>
        <begin position="296"/>
        <end position="298"/>
    </location>
</feature>
<feature type="turn" evidence="20">
    <location>
        <begin position="299"/>
        <end position="301"/>
    </location>
</feature>
<feature type="helix" evidence="19">
    <location>
        <begin position="303"/>
        <end position="318"/>
    </location>
</feature>
<feature type="strand" evidence="19">
    <location>
        <begin position="324"/>
        <end position="327"/>
    </location>
</feature>
<feature type="helix" evidence="19">
    <location>
        <begin position="334"/>
        <end position="341"/>
    </location>
</feature>
<feature type="strand" evidence="20">
    <location>
        <begin position="348"/>
        <end position="350"/>
    </location>
</feature>
<feature type="helix" evidence="20">
    <location>
        <begin position="357"/>
        <end position="367"/>
    </location>
</feature>
<feature type="helix" evidence="19">
    <location>
        <begin position="374"/>
        <end position="379"/>
    </location>
</feature>
<feature type="turn" evidence="19">
    <location>
        <begin position="380"/>
        <end position="382"/>
    </location>
</feature>
<feature type="helix" evidence="19">
    <location>
        <begin position="383"/>
        <end position="386"/>
    </location>
</feature>
<feature type="helix" evidence="19">
    <location>
        <begin position="388"/>
        <end position="393"/>
    </location>
</feature>
<feature type="helix" evidence="19">
    <location>
        <begin position="395"/>
        <end position="407"/>
    </location>
</feature>
<feature type="strand" evidence="19">
    <location>
        <begin position="414"/>
        <end position="417"/>
    </location>
</feature>
<feature type="helix" evidence="19">
    <location>
        <begin position="418"/>
        <end position="425"/>
    </location>
</feature>
<feature type="strand" evidence="19">
    <location>
        <begin position="429"/>
        <end position="434"/>
    </location>
</feature>
<feature type="helix" evidence="19">
    <location>
        <begin position="441"/>
        <end position="447"/>
    </location>
</feature>
<feature type="strand" evidence="19">
    <location>
        <begin position="451"/>
        <end position="455"/>
    </location>
</feature>
<feature type="helix" evidence="19">
    <location>
        <begin position="458"/>
        <end position="460"/>
    </location>
</feature>
<feature type="helix" evidence="19">
    <location>
        <begin position="461"/>
        <end position="471"/>
    </location>
</feature>
<feature type="helix" evidence="19">
    <location>
        <begin position="478"/>
        <end position="486"/>
    </location>
</feature>
<evidence type="ECO:0000250" key="1"/>
<evidence type="ECO:0000250" key="2">
    <source>
        <dbReference type="UniProtKB" id="Q920F5"/>
    </source>
</evidence>
<evidence type="ECO:0000250" key="3">
    <source>
        <dbReference type="UniProtKB" id="Q99J39"/>
    </source>
</evidence>
<evidence type="ECO:0000255" key="4"/>
<evidence type="ECO:0000269" key="5">
    <source>
    </source>
</evidence>
<evidence type="ECO:0000269" key="6">
    <source>
    </source>
</evidence>
<evidence type="ECO:0000269" key="7">
    <source>
    </source>
</evidence>
<evidence type="ECO:0000269" key="8">
    <source>
    </source>
</evidence>
<evidence type="ECO:0000269" key="9">
    <source>
    </source>
</evidence>
<evidence type="ECO:0000269" key="10">
    <source>
    </source>
</evidence>
<evidence type="ECO:0000269" key="11">
    <source>
    </source>
</evidence>
<evidence type="ECO:0000303" key="12">
    <source>
    </source>
</evidence>
<evidence type="ECO:0000303" key="13">
    <source>
    </source>
</evidence>
<evidence type="ECO:0000303" key="14">
    <source>
    </source>
</evidence>
<evidence type="ECO:0000305" key="15"/>
<evidence type="ECO:0000305" key="16">
    <source>
    </source>
</evidence>
<evidence type="ECO:0000305" key="17">
    <source>
    </source>
</evidence>
<evidence type="ECO:0000312" key="18">
    <source>
        <dbReference type="HGNC" id="HGNC:7150"/>
    </source>
</evidence>
<evidence type="ECO:0007829" key="19">
    <source>
        <dbReference type="PDB" id="2YGW"/>
    </source>
</evidence>
<evidence type="ECO:0007829" key="20">
    <source>
        <dbReference type="PDB" id="4F0X"/>
    </source>
</evidence>
<reference key="1">
    <citation type="journal article" date="1999" name="Am. J. Hum. Genet.">
        <title>The molecular basis of malonyl-CoA decarboxylase deficiency.</title>
        <authorList>
            <person name="FitzPatrick D.R."/>
            <person name="Hill A."/>
            <person name="Tolmie J.L."/>
            <person name="Thorburn D.R."/>
            <person name="Christodoulou J."/>
        </authorList>
    </citation>
    <scope>NUCLEOTIDE SEQUENCE [MRNA] (ISOFORM CYTOPLASMIC+PEROXISOMAL)</scope>
    <scope>CATALYTIC ACTIVITY</scope>
    <scope>SUBCELLULAR LOCATION</scope>
    <scope>INVOLVEMENT IN MLYCD DEFICIENCY</scope>
</reference>
<reference key="2">
    <citation type="journal article" date="1999" name="J. Biol. Chem.">
        <title>MCD encodes peroxisomal and cytoplasmic forms of malonyl-CoA decarboxylase and is mutated in malonyl-CoA decarboxylase deficiency.</title>
        <authorList>
            <person name="Sacksteder K.A."/>
            <person name="Morrell J.C."/>
            <person name="Wanders R.J.A."/>
            <person name="Matalon R."/>
            <person name="Gould S.J."/>
        </authorList>
    </citation>
    <scope>NUCLEOTIDE SEQUENCE [MRNA] (ISOFORM CYTOPLASMIC+PEROXISOMAL)</scope>
    <scope>FUNCTION</scope>
    <scope>CATALYTIC ACTIVITY</scope>
    <scope>BIOPHYSICOCHEMICAL PROPERTIES</scope>
    <scope>TISSUE SPECIFICITY</scope>
    <source>
        <tissue>Heart</tissue>
    </source>
</reference>
<reference key="3">
    <citation type="journal article" date="1999" name="J. Lipid Res.">
        <title>Cloning and mutational analysis of human malonyl-coenzyme A decarboxylase.</title>
        <authorList>
            <person name="Gao J."/>
            <person name="Waber L."/>
            <person name="Bennett M.J."/>
            <person name="Gibson K.M."/>
            <person name="Cohen J.C."/>
        </authorList>
    </citation>
    <scope>NUCLEOTIDE SEQUENCE [MRNA] (ISOFORM MITOCHONDRIAL)</scope>
    <scope>CATALYTIC ACTIVITY</scope>
</reference>
<reference key="4">
    <citation type="journal article" date="2004" name="Nature">
        <title>The sequence and analysis of duplication-rich human chromosome 16.</title>
        <authorList>
            <person name="Martin J."/>
            <person name="Han C."/>
            <person name="Gordon L.A."/>
            <person name="Terry A."/>
            <person name="Prabhakar S."/>
            <person name="She X."/>
            <person name="Xie G."/>
            <person name="Hellsten U."/>
            <person name="Chan Y.M."/>
            <person name="Altherr M."/>
            <person name="Couronne O."/>
            <person name="Aerts A."/>
            <person name="Bajorek E."/>
            <person name="Black S."/>
            <person name="Blumer H."/>
            <person name="Branscomb E."/>
            <person name="Brown N.C."/>
            <person name="Bruno W.J."/>
            <person name="Buckingham J.M."/>
            <person name="Callen D.F."/>
            <person name="Campbell C.S."/>
            <person name="Campbell M.L."/>
            <person name="Campbell E.W."/>
            <person name="Caoile C."/>
            <person name="Challacombe J.F."/>
            <person name="Chasteen L.A."/>
            <person name="Chertkov O."/>
            <person name="Chi H.C."/>
            <person name="Christensen M."/>
            <person name="Clark L.M."/>
            <person name="Cohn J.D."/>
            <person name="Denys M."/>
            <person name="Detter J.C."/>
            <person name="Dickson M."/>
            <person name="Dimitrijevic-Bussod M."/>
            <person name="Escobar J."/>
            <person name="Fawcett J.J."/>
            <person name="Flowers D."/>
            <person name="Fotopulos D."/>
            <person name="Glavina T."/>
            <person name="Gomez M."/>
            <person name="Gonzales E."/>
            <person name="Goodstein D."/>
            <person name="Goodwin L.A."/>
            <person name="Grady D.L."/>
            <person name="Grigoriev I."/>
            <person name="Groza M."/>
            <person name="Hammon N."/>
            <person name="Hawkins T."/>
            <person name="Haydu L."/>
            <person name="Hildebrand C.E."/>
            <person name="Huang W."/>
            <person name="Israni S."/>
            <person name="Jett J."/>
            <person name="Jewett P.B."/>
            <person name="Kadner K."/>
            <person name="Kimball H."/>
            <person name="Kobayashi A."/>
            <person name="Krawczyk M.-C."/>
            <person name="Leyba T."/>
            <person name="Longmire J.L."/>
            <person name="Lopez F."/>
            <person name="Lou Y."/>
            <person name="Lowry S."/>
            <person name="Ludeman T."/>
            <person name="Manohar C.F."/>
            <person name="Mark G.A."/>
            <person name="McMurray K.L."/>
            <person name="Meincke L.J."/>
            <person name="Morgan J."/>
            <person name="Moyzis R.K."/>
            <person name="Mundt M.O."/>
            <person name="Munk A.C."/>
            <person name="Nandkeshwar R.D."/>
            <person name="Pitluck S."/>
            <person name="Pollard M."/>
            <person name="Predki P."/>
            <person name="Parson-Quintana B."/>
            <person name="Ramirez L."/>
            <person name="Rash S."/>
            <person name="Retterer J."/>
            <person name="Ricke D.O."/>
            <person name="Robinson D.L."/>
            <person name="Rodriguez A."/>
            <person name="Salamov A."/>
            <person name="Saunders E.H."/>
            <person name="Scott D."/>
            <person name="Shough T."/>
            <person name="Stallings R.L."/>
            <person name="Stalvey M."/>
            <person name="Sutherland R.D."/>
            <person name="Tapia R."/>
            <person name="Tesmer J.G."/>
            <person name="Thayer N."/>
            <person name="Thompson L.S."/>
            <person name="Tice H."/>
            <person name="Torney D.C."/>
            <person name="Tran-Gyamfi M."/>
            <person name="Tsai M."/>
            <person name="Ulanovsky L.E."/>
            <person name="Ustaszewska A."/>
            <person name="Vo N."/>
            <person name="White P.S."/>
            <person name="Williams A.L."/>
            <person name="Wills P.L."/>
            <person name="Wu J.-R."/>
            <person name="Wu K."/>
            <person name="Yang J."/>
            <person name="DeJong P."/>
            <person name="Bruce D."/>
            <person name="Doggett N.A."/>
            <person name="Deaven L."/>
            <person name="Schmutz J."/>
            <person name="Grimwood J."/>
            <person name="Richardson P."/>
            <person name="Rokhsar D.S."/>
            <person name="Eichler E.E."/>
            <person name="Gilna P."/>
            <person name="Lucas S.M."/>
            <person name="Myers R.M."/>
            <person name="Rubin E.M."/>
            <person name="Pennacchio L.A."/>
        </authorList>
    </citation>
    <scope>NUCLEOTIDE SEQUENCE [LARGE SCALE GENOMIC DNA]</scope>
</reference>
<reference key="5">
    <citation type="journal article" date="2004" name="Genome Res.">
        <title>The status, quality, and expansion of the NIH full-length cDNA project: the Mammalian Gene Collection (MGC).</title>
        <authorList>
            <consortium name="The MGC Project Team"/>
        </authorList>
    </citation>
    <scope>NUCLEOTIDE SEQUENCE [LARGE SCALE MRNA] (ISOFORMS MITOCHONDRIAL AND CYTOPLASMIC+PEROXISOMAL)</scope>
    <source>
        <tissue>Eye</tissue>
        <tissue>Lung</tissue>
    </source>
</reference>
<reference key="6">
    <citation type="journal article" date="2004" name="Protein Expr. Purif.">
        <title>Expression, purification, and characterization of human malonyl-CoA decarboxylase.</title>
        <authorList>
            <person name="Zhou D."/>
            <person name="Yuen P."/>
            <person name="Chu D."/>
            <person name="Thon V."/>
            <person name="McConnell S."/>
            <person name="Brown S."/>
            <person name="Tsang A."/>
            <person name="Pena M."/>
            <person name="Russell A."/>
            <person name="Cheng J.F."/>
            <person name="Nadzan A.M."/>
            <person name="Barbosa M.S."/>
            <person name="Dyck J.R."/>
            <person name="Lopaschuk G.D."/>
            <person name="Yang G."/>
        </authorList>
    </citation>
    <scope>FUNCTION</scope>
    <scope>CATALYTIC ACTIVITY</scope>
    <scope>ACTIVITY REGULATION</scope>
    <scope>BIOPHYSICOCHEMICAL PROPERTIES</scope>
</reference>
<reference key="7">
    <citation type="journal article" date="2008" name="Diabetes">
        <title>Malonyl CoenzymeA decarboxylase regulates lipid and glucose metabolism in human skeletal muscle.</title>
        <authorList>
            <person name="Bouzakri K."/>
            <person name="Austin R."/>
            <person name="Rune A."/>
            <person name="Lassman M.E."/>
            <person name="Garcia-Roves P.M."/>
            <person name="Berger J.P."/>
            <person name="Krook A."/>
            <person name="Chibalin A.V."/>
            <person name="Zhang B.B."/>
            <person name="Zierath J.R."/>
        </authorList>
    </citation>
    <scope>FUNCTION</scope>
    <scope>TISSUE SPECIFICITY</scope>
</reference>
<reference key="8">
    <citation type="journal article" date="2010" name="J. Am. Chem. Soc.">
        <title>A proteome-wide perspective on peroxisome targeting signal 1(PTS1)-Pex5p affinities.</title>
        <authorList>
            <person name="Ghosh D."/>
            <person name="Berg J.M."/>
        </authorList>
    </citation>
    <scope>ASSOCIATION WITH PEX5</scope>
</reference>
<reference key="9">
    <citation type="journal article" date="2015" name="Proteomics">
        <title>N-terminome analysis of the human mitochondrial proteome.</title>
        <authorList>
            <person name="Vaca Jacome A.S."/>
            <person name="Rabilloud T."/>
            <person name="Schaeffer-Reiss C."/>
            <person name="Rompais M."/>
            <person name="Ayoub D."/>
            <person name="Lane L."/>
            <person name="Bairoch A."/>
            <person name="Van Dorsselaer A."/>
            <person name="Carapito C."/>
        </authorList>
    </citation>
    <scope>IDENTIFICATION BY MASS SPECTROMETRY [LARGE SCALE ANALYSIS]</scope>
</reference>
<reference key="10">
    <citation type="journal article" date="2013" name="J. Biol. Chem.">
        <title>Structural asymmetry and disulphide bridges among subunits modulate the activity of human Malonyl-CoA Decarboxylase.</title>
        <authorList>
            <person name="Aparicio D."/>
            <person name="Perez R."/>
            <person name="Carpena X."/>
            <person name="Diaz M."/>
            <person name="Ferrer J.C."/>
            <person name="Loewen P.C."/>
            <person name="Fita I."/>
        </authorList>
    </citation>
    <scope>X-RAY CRYSTALLOGRAPHY (3.3 ANGSTROMS) OF 39-493 IN COMPLEX WITH LIGAND REPRESENTING COENZYME A</scope>
    <scope>CATALYTIC ACTIVITY</scope>
    <scope>FUNCTION</scope>
    <scope>ACTIVITY REGULATION</scope>
    <scope>BIOPHYSICOCHEMICAL PROPERTIES</scope>
    <scope>SUBUNIT</scope>
    <scope>DISULFIDE BONDS</scope>
    <scope>MUTAGENESIS OF CYS-206; CYS-243 AND GLU-302</scope>
    <scope>IDENTIFICATION BY MASS SPECTROMETRY</scope>
</reference>
<reference key="11">
    <citation type="journal article" date="2013" name="Structure">
        <title>Crystal structures of malonyl-coenzyme A decarboxylase provide insights into its catalytic mechanism and disease-causing mutations.</title>
        <authorList>
            <person name="Froese D.S."/>
            <person name="Forouhar F."/>
            <person name="Tran T.H."/>
            <person name="Vollmar M."/>
            <person name="Kim Y.S."/>
            <person name="Lew S."/>
            <person name="Neely H."/>
            <person name="Seetharaman J."/>
            <person name="Shen Y."/>
            <person name="Xiao R."/>
            <person name="Acton T.B."/>
            <person name="Everett J.K."/>
            <person name="Cannone G."/>
            <person name="Puranik S."/>
            <person name="Savitsky P."/>
            <person name="Krojer T."/>
            <person name="Pilka E.S."/>
            <person name="Kiyani W."/>
            <person name="Lee W.H."/>
            <person name="Marsden B.D."/>
            <person name="von Delft F."/>
            <person name="Allerston C.K."/>
            <person name="Spagnolo L."/>
            <person name="Gileadi O."/>
            <person name="Montelione G.T."/>
            <person name="Oppermann U."/>
            <person name="Yue W.W."/>
            <person name="Tong L."/>
        </authorList>
    </citation>
    <scope>X-RAY CRYSTALLOGRAPHY (2.8 ANGSTROMS) OF 40-490</scope>
    <scope>SUBUNIT</scope>
    <scope>ACTIVE SITE</scope>
    <scope>MUTAGENESIS OF SER-290; SER-329; HIS-423 AND TYR-456</scope>
</reference>
<name>DCMC_HUMAN</name>
<proteinExistence type="evidence at protein level"/>
<accession>O95822</accession>
<accession>Q9UNU5</accession>
<accession>Q9Y3F2</accession>
<comment type="function">
    <text evidence="6 7 8 9">Catalyzes the conversion of malonyl-CoA to acetyl-CoA. In the fatty acid biosynthesis MCD selectively removes malonyl-CoA and thus assures that methyl-malonyl-CoA is the only chain elongating substrate for fatty acid synthase and that fatty acids with multiple methyl side chains are produced. In peroxisomes it may be involved in degrading intraperoxisomal malonyl-CoA, which is generated by the peroxisomal beta-oxidation of odd chain-length dicarboxylic fatty acids. Plays a role in the metabolic balance between glucose and lipid oxidation in muscle independent of alterations in insulin signaling. May play a role in controlling the extent of ischemic injury by promoting glucose oxidation.</text>
</comment>
<comment type="catalytic activity">
    <reaction evidence="5 6 7 9 11">
        <text>malonyl-CoA + H(+) = acetyl-CoA + CO2</text>
        <dbReference type="Rhea" id="RHEA:18781"/>
        <dbReference type="ChEBI" id="CHEBI:15378"/>
        <dbReference type="ChEBI" id="CHEBI:16526"/>
        <dbReference type="ChEBI" id="CHEBI:57288"/>
        <dbReference type="ChEBI" id="CHEBI:57384"/>
        <dbReference type="EC" id="4.1.1.9"/>
    </reaction>
    <physiologicalReaction direction="left-to-right" evidence="16">
        <dbReference type="Rhea" id="RHEA:18782"/>
    </physiologicalReaction>
</comment>
<comment type="activity regulation">
    <text evidence="7 9">Malonyl-CoA decarboxylase activity does not require any cofactors or divalent metal ions. Formation of interchain disulfide bonds leads to positive cooperativity between active sites and increases the affinity for malonyl-CoA and the catalytic efficiency (in vitro).</text>
</comment>
<comment type="biophysicochemical properties">
    <kinetics>
        <KM evidence="7">0.36 mM for malonyl-CoA (Malonyl-CoA decarboxylase mitochondrial form)</KM>
        <KM evidence="9">0.83 mM for malonyl-CoA (Malonyl-CoA decarboxylase mitochondrial form)</KM>
        <KM evidence="6">0.22 mM for malonyl-CoA (Malonyl-CoA decarboxylase cytoplasmic+peroxisomal form)</KM>
        <KM evidence="7">0.33 mM for malonyl-CoA (Malonyl-CoA decarboxylase cytoplasmic+peroxisomal form)</KM>
        <text evidence="7">kcat is 19 sec(-1) with malonyl-CoA for malonyl-CoA decarboxylase mitochondrial form (PubMed:15003260). kcat is 28 sec(-1) with malonyl-CoA for Malonyl-CoA decarboxylase cytoplasmic+peroxisomal form (PubMed:15003260). The catalytic efficiency for malonyl-CoA is at least 1.09-fold higher with the malonyl-CoA decarboxylase cytoplasmic+peroxisomal form (PubMed:15003260).</text>
    </kinetics>
</comment>
<comment type="pathway">
    <text>Metabolic intermediate biosynthesis; acetyl-CoA biosynthesis; acetyl-CoA from malonyl-CoA: step 1/1.</text>
</comment>
<comment type="subunit">
    <text evidence="9 10">Homotetramer. Dimer of dimers. The two subunits within a dimer display conformational differences suggesting that at any given moment, only one of the two subunits is competent for malonyl-CoA binding and catalytic activity. Under oxidizing conditions, can form disulfide-linked homotetramers (in vitro). Associates with the peroxisomal targeting signal receptor PEX5.</text>
</comment>
<comment type="interaction">
    <interactant intactId="EBI-10714916">
        <id>O95822</id>
    </interactant>
    <interactant intactId="EBI-10714916">
        <id>O95822</id>
        <label>MLYCD</label>
    </interactant>
    <organismsDiffer>false</organismsDiffer>
    <experiments>4</experiments>
</comment>
<comment type="interaction">
    <interactant intactId="EBI-13315321">
        <id>O95822-2</id>
    </interactant>
    <interactant intactId="EBI-714003">
        <id>P52756</id>
        <label>RBM5</label>
    </interactant>
    <organismsDiffer>false</organismsDiffer>
    <experiments>4</experiments>
</comment>
<comment type="interaction">
    <interactant intactId="EBI-13315321">
        <id>O95822-2</id>
    </interactant>
    <interactant intactId="EBI-725656">
        <id>Q8TB05</id>
        <label>UBALD1</label>
    </interactant>
    <organismsDiffer>false</organismsDiffer>
    <experiments>3</experiments>
</comment>
<comment type="subcellular location">
    <subcellularLocation>
        <location evidence="5">Cytoplasm</location>
    </subcellularLocation>
    <subcellularLocation>
        <location evidence="5">Mitochondrion matrix</location>
    </subcellularLocation>
    <subcellularLocation>
        <location evidence="5">Peroxisome</location>
    </subcellularLocation>
    <subcellularLocation>
        <location evidence="2">Peroxisome matrix</location>
    </subcellularLocation>
    <text evidence="2">Enzymatically active in all three subcellular compartments.</text>
</comment>
<comment type="alternative products">
    <event type="alternative initiation"/>
    <isoform>
        <id>O95822-1</id>
        <name>Mitochondrial</name>
        <sequence type="displayed"/>
    </isoform>
    <isoform>
        <id>O95822-2</id>
        <name>Cytoplasmic+peroxisomal</name>
        <sequence type="described" ref="VSP_047649"/>
    </isoform>
    <text>A single transcription start site has been demonstrated in Rat.</text>
</comment>
<comment type="tissue specificity">
    <text evidence="6 8">Expressed in fibroblasts and hepatoblastoma cells (at protein level). Expressed strongly in heart, liver, skeletal muscle, kidney and pancreas. Expressed in myotubes. Expressed weakly in brain, placenta, spleen, thymus, testis, ovary and small intestine.</text>
</comment>
<comment type="PTM">
    <text evidence="3">Acetylation at Lys-472 activates malonyl-CoA decarboxylase activity. Deacetylation at Lys-472 by SIRT4 represses activity, leading to promote lipogenesis (By similarity).</text>
</comment>
<comment type="PTM">
    <text evidence="15">Interchain disulfide bonds may form in peroxisomes (Potential). Interchain disulfide bonds are not expected to form in the reducing environment of the cytoplasm and mitochondria.</text>
</comment>
<comment type="disease" evidence="5">
    <disease id="DI-01931">
        <name>Malonyl-CoA decarboxylase deficiency</name>
        <acronym>MLYCD deficiency</acronym>
        <description>Autosomal recessive disease characterized by abdominal pain, chronic constipation, episodic vomiting, metabolic acidosis and malonic aciduria.</description>
        <dbReference type="MIM" id="248360"/>
    </disease>
    <text>The disease is caused by variants affecting the gene represented in this entry.</text>
</comment>
<comment type="miscellaneous">
    <molecule>Isoform Cytoplasmic+peroxisomal</molecule>
    <text evidence="15">May be produced by alternative initiation at Met-40 of isoform mitochondrial. Alternatively, represents a proteolytic processed form of the mitochondrial form.</text>
</comment>
<comment type="sequence caution" evidence="15">
    <conflict type="frameshift">
        <sequence resource="EMBL-CDS" id="AAD16177"/>
    </conflict>
</comment>
<gene>
    <name evidence="18" type="primary">MLYCD</name>
</gene>
<sequence>MRGFGPGLTARRLLPLRLPPRPPGPRLASGQAAGALERAMDELLRRAVPPTPAYELREKTPAPAEGQCADFVSFYGGLAETAQRAELLGRLARGFGVDHGQVAEQSAGVLHLRQQQREAAVLLQAEDRLRYALVPRYRGLFHHISKLDGGVRFLVQLRADLLEAQALKLVEGPDVREMNGVLKGMLSEWFSSGFLNLERVTWHSPCEVLQKISEAEAVHPVKNWMDMKRRVGPYRRCYFFSHCSTPGEPLVVLHVALTGDISSNIQAIVKEHPPSETEEKNKITAAIFYSISLTQQGLQGVELGTFLIKRVVKELQREFPHLGVFSSLSPIPGFTKWLLGLLNSQTKEHGRNELFTDSECKEISEITGGPINETLKLLLSSSEWVQSEKLVRALQTPLMRLCAWYLYGEKHRGYALNPVANFHLQNGAVLWRINWMADVSLRGITGSCGLMANYRYFLEETGPNSTSYLGSKIIKASEQVLSLVAQFQKNSKL</sequence>
<dbReference type="EC" id="4.1.1.9" evidence="5 6 7 9 11"/>
<dbReference type="EMBL" id="AF097832">
    <property type="protein sequence ID" value="AAD16177.2"/>
    <property type="status" value="ALT_FRAME"/>
    <property type="molecule type" value="mRNA"/>
</dbReference>
<dbReference type="EMBL" id="AF153679">
    <property type="protein sequence ID" value="AAD34631.1"/>
    <property type="molecule type" value="mRNA"/>
</dbReference>
<dbReference type="EMBL" id="AF090834">
    <property type="protein sequence ID" value="AAD48994.1"/>
    <property type="molecule type" value="mRNA"/>
</dbReference>
<dbReference type="EMBL" id="AC009119">
    <property type="status" value="NOT_ANNOTATED_CDS"/>
    <property type="molecule type" value="Genomic_DNA"/>
</dbReference>
<dbReference type="EMBL" id="BC000286">
    <property type="protein sequence ID" value="AAH00286.1"/>
    <property type="molecule type" value="mRNA"/>
</dbReference>
<dbReference type="EMBL" id="BC052592">
    <property type="protein sequence ID" value="AAH52592.1"/>
    <property type="molecule type" value="mRNA"/>
</dbReference>
<dbReference type="CCDS" id="CCDS42206.1">
    <molecule id="O95822-1"/>
</dbReference>
<dbReference type="RefSeq" id="NP_036345.2">
    <molecule id="O95822-1"/>
    <property type="nucleotide sequence ID" value="NM_012213.3"/>
</dbReference>
<dbReference type="PDB" id="2YGW">
    <property type="method" value="X-ray"/>
    <property type="resolution" value="2.80 A"/>
    <property type="chains" value="A/B=40-490"/>
</dbReference>
<dbReference type="PDB" id="4F0X">
    <property type="method" value="X-ray"/>
    <property type="resolution" value="3.29 A"/>
    <property type="chains" value="A/B/C/D/E/F/G/H=39-493"/>
</dbReference>
<dbReference type="PDBsum" id="2YGW"/>
<dbReference type="PDBsum" id="4F0X"/>
<dbReference type="SMR" id="O95822"/>
<dbReference type="BioGRID" id="116989">
    <property type="interactions" value="33"/>
</dbReference>
<dbReference type="DIP" id="DIP-60405N"/>
<dbReference type="FunCoup" id="O95822">
    <property type="interactions" value="1271"/>
</dbReference>
<dbReference type="IntAct" id="O95822">
    <property type="interactions" value="31"/>
</dbReference>
<dbReference type="STRING" id="9606.ENSP00000262430"/>
<dbReference type="BindingDB" id="O95822"/>
<dbReference type="ChEMBL" id="CHEMBL4698"/>
<dbReference type="GuidetoPHARMACOLOGY" id="1275"/>
<dbReference type="SwissLipids" id="SLP:000000251"/>
<dbReference type="GlyGen" id="O95822">
    <property type="glycosylation" value="2 sites, 1 O-linked glycan (1 site)"/>
</dbReference>
<dbReference type="iPTMnet" id="O95822"/>
<dbReference type="PhosphoSitePlus" id="O95822"/>
<dbReference type="SwissPalm" id="O95822"/>
<dbReference type="BioMuta" id="MLYCD"/>
<dbReference type="jPOST" id="O95822"/>
<dbReference type="MassIVE" id="O95822"/>
<dbReference type="PaxDb" id="9606-ENSP00000262430"/>
<dbReference type="PeptideAtlas" id="O95822"/>
<dbReference type="ProteomicsDB" id="51071">
    <molecule id="O95822-1"/>
</dbReference>
<dbReference type="Pumba" id="O95822"/>
<dbReference type="Antibodypedia" id="30519">
    <property type="antibodies" value="108 antibodies from 23 providers"/>
</dbReference>
<dbReference type="DNASU" id="23417"/>
<dbReference type="Ensembl" id="ENST00000262430.6">
    <molecule id="O95822-1"/>
    <property type="protein sequence ID" value="ENSP00000262430.4"/>
    <property type="gene ID" value="ENSG00000103150.7"/>
</dbReference>
<dbReference type="GeneID" id="23417"/>
<dbReference type="KEGG" id="hsa:23417"/>
<dbReference type="MANE-Select" id="ENST00000262430.6">
    <property type="protein sequence ID" value="ENSP00000262430.4"/>
    <property type="RefSeq nucleotide sequence ID" value="NM_012213.3"/>
    <property type="RefSeq protein sequence ID" value="NP_036345.2"/>
</dbReference>
<dbReference type="UCSC" id="uc002fgz.4">
    <molecule id="O95822-1"/>
    <property type="organism name" value="human"/>
</dbReference>
<dbReference type="AGR" id="HGNC:7150"/>
<dbReference type="CTD" id="23417"/>
<dbReference type="DisGeNET" id="23417"/>
<dbReference type="GeneCards" id="MLYCD"/>
<dbReference type="HGNC" id="HGNC:7150">
    <property type="gene designation" value="MLYCD"/>
</dbReference>
<dbReference type="HPA" id="ENSG00000103150">
    <property type="expression patterns" value="Tissue enhanced (tongue)"/>
</dbReference>
<dbReference type="MalaCards" id="MLYCD"/>
<dbReference type="MIM" id="248360">
    <property type="type" value="phenotype"/>
</dbReference>
<dbReference type="MIM" id="606761">
    <property type="type" value="gene"/>
</dbReference>
<dbReference type="neXtProt" id="NX_O95822"/>
<dbReference type="OpenTargets" id="ENSG00000103150"/>
<dbReference type="Orphanet" id="943">
    <property type="disease" value="Malonic aciduria"/>
</dbReference>
<dbReference type="PharmGKB" id="PA30861"/>
<dbReference type="VEuPathDB" id="HostDB:ENSG00000103150"/>
<dbReference type="eggNOG" id="KOG3018">
    <property type="taxonomic scope" value="Eukaryota"/>
</dbReference>
<dbReference type="GeneTree" id="ENSGT00390000005410"/>
<dbReference type="HOGENOM" id="CLU_023433_0_0_1"/>
<dbReference type="InParanoid" id="O95822"/>
<dbReference type="OMA" id="PIDWSTP"/>
<dbReference type="OrthoDB" id="426718at2759"/>
<dbReference type="PAN-GO" id="O95822">
    <property type="GO annotations" value="6 GO annotations based on evolutionary models"/>
</dbReference>
<dbReference type="PhylomeDB" id="O95822"/>
<dbReference type="TreeFam" id="TF312959"/>
<dbReference type="BRENDA" id="4.1.1.9">
    <property type="organism ID" value="2681"/>
</dbReference>
<dbReference type="PathwayCommons" id="O95822"/>
<dbReference type="Reactome" id="R-HSA-390247">
    <molecule id="O95822-2"/>
    <property type="pathway name" value="Beta-oxidation of very long chain fatty acids"/>
</dbReference>
<dbReference type="Reactome" id="R-HSA-9033241">
    <molecule id="O95822-2"/>
    <property type="pathway name" value="Peroxisomal protein import"/>
</dbReference>
<dbReference type="SABIO-RK" id="O95822"/>
<dbReference type="SignaLink" id="O95822"/>
<dbReference type="UniPathway" id="UPA00340">
    <property type="reaction ID" value="UER00710"/>
</dbReference>
<dbReference type="BioGRID-ORCS" id="23417">
    <property type="hits" value="10 hits in 1154 CRISPR screens"/>
</dbReference>
<dbReference type="ChiTaRS" id="MLYCD">
    <property type="organism name" value="human"/>
</dbReference>
<dbReference type="EvolutionaryTrace" id="O95822"/>
<dbReference type="GenomeRNAi" id="23417"/>
<dbReference type="Pharos" id="O95822">
    <property type="development level" value="Tchem"/>
</dbReference>
<dbReference type="PRO" id="PR:O95822"/>
<dbReference type="Proteomes" id="UP000005640">
    <property type="component" value="Chromosome 16"/>
</dbReference>
<dbReference type="RNAct" id="O95822">
    <property type="molecule type" value="protein"/>
</dbReference>
<dbReference type="Bgee" id="ENSG00000103150">
    <property type="expression patterns" value="Expressed in skeletal muscle tissue of rectus abdominis and 163 other cell types or tissues"/>
</dbReference>
<dbReference type="ExpressionAtlas" id="O95822">
    <property type="expression patterns" value="baseline and differential"/>
</dbReference>
<dbReference type="GO" id="GO:0005737">
    <property type="term" value="C:cytoplasm"/>
    <property type="evidence" value="ECO:0000314"/>
    <property type="project" value="UniProtKB"/>
</dbReference>
<dbReference type="GO" id="GO:0005829">
    <property type="term" value="C:cytosol"/>
    <property type="evidence" value="ECO:0000304"/>
    <property type="project" value="Reactome"/>
</dbReference>
<dbReference type="GO" id="GO:0005759">
    <property type="term" value="C:mitochondrial matrix"/>
    <property type="evidence" value="ECO:0000250"/>
    <property type="project" value="UniProtKB"/>
</dbReference>
<dbReference type="GO" id="GO:0005739">
    <property type="term" value="C:mitochondrion"/>
    <property type="evidence" value="ECO:0000314"/>
    <property type="project" value="UniProtKB"/>
</dbReference>
<dbReference type="GO" id="GO:0005782">
    <property type="term" value="C:peroxisomal matrix"/>
    <property type="evidence" value="ECO:0000250"/>
    <property type="project" value="UniProtKB"/>
</dbReference>
<dbReference type="GO" id="GO:0005777">
    <property type="term" value="C:peroxisome"/>
    <property type="evidence" value="ECO:0000314"/>
    <property type="project" value="UniProtKB"/>
</dbReference>
<dbReference type="GO" id="GO:0042802">
    <property type="term" value="F:identical protein binding"/>
    <property type="evidence" value="ECO:0000353"/>
    <property type="project" value="IntAct"/>
</dbReference>
<dbReference type="GO" id="GO:0050080">
    <property type="term" value="F:malonyl-CoA decarboxylase activity"/>
    <property type="evidence" value="ECO:0000314"/>
    <property type="project" value="UniProtKB"/>
</dbReference>
<dbReference type="GO" id="GO:0006085">
    <property type="term" value="P:acetyl-CoA biosynthetic process"/>
    <property type="evidence" value="ECO:0000314"/>
    <property type="project" value="UniProtKB"/>
</dbReference>
<dbReference type="GO" id="GO:0006637">
    <property type="term" value="P:acyl-CoA metabolic process"/>
    <property type="evidence" value="ECO:0000304"/>
    <property type="project" value="Reactome"/>
</dbReference>
<dbReference type="GO" id="GO:0006633">
    <property type="term" value="P:fatty acid biosynthetic process"/>
    <property type="evidence" value="ECO:0000314"/>
    <property type="project" value="UniProtKB"/>
</dbReference>
<dbReference type="GO" id="GO:0019395">
    <property type="term" value="P:fatty acid oxidation"/>
    <property type="evidence" value="ECO:0007669"/>
    <property type="project" value="Ensembl"/>
</dbReference>
<dbReference type="GO" id="GO:2001294">
    <property type="term" value="P:malonyl-CoA catabolic process"/>
    <property type="evidence" value="ECO:0000314"/>
    <property type="project" value="UniProtKB"/>
</dbReference>
<dbReference type="GO" id="GO:0046321">
    <property type="term" value="P:positive regulation of fatty acid oxidation"/>
    <property type="evidence" value="ECO:0000315"/>
    <property type="project" value="UniProtKB"/>
</dbReference>
<dbReference type="GO" id="GO:0031998">
    <property type="term" value="P:regulation of fatty acid beta-oxidation"/>
    <property type="evidence" value="ECO:0007669"/>
    <property type="project" value="Ensembl"/>
</dbReference>
<dbReference type="GO" id="GO:0010906">
    <property type="term" value="P:regulation of glucose metabolic process"/>
    <property type="evidence" value="ECO:0000315"/>
    <property type="project" value="UniProtKB"/>
</dbReference>
<dbReference type="GO" id="GO:0002931">
    <property type="term" value="P:response to ischemia"/>
    <property type="evidence" value="ECO:0000250"/>
    <property type="project" value="UniProtKB"/>
</dbReference>
<dbReference type="GO" id="GO:0007584">
    <property type="term" value="P:response to nutrient"/>
    <property type="evidence" value="ECO:0007669"/>
    <property type="project" value="Ensembl"/>
</dbReference>
<dbReference type="FunFam" id="1.20.140.90:FF:000001">
    <property type="entry name" value="Malonyl-CoA decarboxylase, mitochondrial"/>
    <property type="match status" value="1"/>
</dbReference>
<dbReference type="FunFam" id="3.40.630.150:FF:000001">
    <property type="entry name" value="Malonyl-CoA decarboxylase, mitochondrial"/>
    <property type="match status" value="1"/>
</dbReference>
<dbReference type="Gene3D" id="3.40.630.150">
    <property type="entry name" value="Malonyl-CoA decarboxylase, catalytic domain"/>
    <property type="match status" value="1"/>
</dbReference>
<dbReference type="Gene3D" id="1.20.140.90">
    <property type="entry name" value="Malonyl-CoA decarboxylase, oligemerization domain"/>
    <property type="match status" value="1"/>
</dbReference>
<dbReference type="InterPro" id="IPR038917">
    <property type="entry name" value="Malonyl_CoA_deC"/>
</dbReference>
<dbReference type="InterPro" id="IPR007956">
    <property type="entry name" value="Malonyl_CoA_deC_C"/>
</dbReference>
<dbReference type="InterPro" id="IPR042303">
    <property type="entry name" value="Malonyl_CoA_deC_C_sf"/>
</dbReference>
<dbReference type="InterPro" id="IPR035372">
    <property type="entry name" value="MCD_N"/>
</dbReference>
<dbReference type="InterPro" id="IPR038351">
    <property type="entry name" value="MCD_N_sf"/>
</dbReference>
<dbReference type="PANTHER" id="PTHR28641">
    <property type="match status" value="1"/>
</dbReference>
<dbReference type="PANTHER" id="PTHR28641:SF1">
    <property type="entry name" value="MALONYL-COA DECARBOXYLASE, MITOCHONDRIAL"/>
    <property type="match status" value="1"/>
</dbReference>
<dbReference type="Pfam" id="PF05292">
    <property type="entry name" value="MCD"/>
    <property type="match status" value="1"/>
</dbReference>
<dbReference type="Pfam" id="PF17408">
    <property type="entry name" value="MCD_N"/>
    <property type="match status" value="1"/>
</dbReference>
<keyword id="KW-0002">3D-structure</keyword>
<keyword id="KW-0007">Acetylation</keyword>
<keyword id="KW-0024">Alternative initiation</keyword>
<keyword id="KW-0963">Cytoplasm</keyword>
<keyword id="KW-0210">Decarboxylase</keyword>
<keyword id="KW-1015">Disulfide bond</keyword>
<keyword id="KW-0275">Fatty acid biosynthesis</keyword>
<keyword id="KW-0276">Fatty acid metabolism</keyword>
<keyword id="KW-0444">Lipid biosynthesis</keyword>
<keyword id="KW-0443">Lipid metabolism</keyword>
<keyword id="KW-0456">Lyase</keyword>
<keyword id="KW-0496">Mitochondrion</keyword>
<keyword id="KW-0576">Peroxisome</keyword>
<keyword id="KW-1267">Proteomics identification</keyword>
<keyword id="KW-1185">Reference proteome</keyword>
<keyword id="KW-0809">Transit peptide</keyword>
<organism>
    <name type="scientific">Homo sapiens</name>
    <name type="common">Human</name>
    <dbReference type="NCBI Taxonomy" id="9606"/>
    <lineage>
        <taxon>Eukaryota</taxon>
        <taxon>Metazoa</taxon>
        <taxon>Chordata</taxon>
        <taxon>Craniata</taxon>
        <taxon>Vertebrata</taxon>
        <taxon>Euteleostomi</taxon>
        <taxon>Mammalia</taxon>
        <taxon>Eutheria</taxon>
        <taxon>Euarchontoglires</taxon>
        <taxon>Primates</taxon>
        <taxon>Haplorrhini</taxon>
        <taxon>Catarrhini</taxon>
        <taxon>Hominidae</taxon>
        <taxon>Homo</taxon>
    </lineage>
</organism>